<name>YCF73_ORYNI</name>
<proteinExistence type="inferred from homology"/>
<sequence>MVLISATRDFRERTKSKLVKIMIWAGIVVITFAIAVRIYPIFIFLLKERIKPLVEALYDKLPWIWEVSLSRYWDRLIDFLDRYLWACAQRIQTGIRKQKGEFVVTFSCRVKKRLYARAIEVGIHLSLLSNLFWILKTTLAVGYRLLWVLYYIISFEGFLGSFRLYLVYFGFYCLLFSGKWLRTSEDRGERQAQISGILLRGMLIECAFSVLCLEEDSNLHAL</sequence>
<reference key="1">
    <citation type="journal article" date="2004" name="Gene">
        <title>The complete nucleotide sequence of wild rice (Oryza nivara) chloroplast genome: first genome wide comparative sequence analysis of wild and cultivated rice.</title>
        <authorList>
            <person name="Masood M.S."/>
            <person name="Nishikawa T."/>
            <person name="Fukuoka S."/>
            <person name="Njenga P.K."/>
            <person name="Tsudzuki T."/>
            <person name="Kadowaki K."/>
        </authorList>
    </citation>
    <scope>NUCLEOTIDE SEQUENCE [LARGE SCALE GENOMIC DNA]</scope>
    <source>
        <strain evidence="2">cv. SL10</strain>
    </source>
</reference>
<protein>
    <recommendedName>
        <fullName>Uncharacterized protein ycf73</fullName>
    </recommendedName>
    <alternativeName>
        <fullName>ORF222</fullName>
    </alternativeName>
</protein>
<dbReference type="EMBL" id="AP006728">
    <property type="protein sequence ID" value="BAD26829.1"/>
    <property type="molecule type" value="Genomic_DNA"/>
</dbReference>
<dbReference type="EMBL" id="AP006728">
    <property type="protein sequence ID" value="BAD26862.1"/>
    <property type="molecule type" value="Genomic_DNA"/>
</dbReference>
<dbReference type="RefSeq" id="YP_052800.1">
    <property type="nucleotide sequence ID" value="NC_005973.1"/>
</dbReference>
<dbReference type="RefSeq" id="YP_052832.1">
    <property type="nucleotide sequence ID" value="NC_005973.1"/>
</dbReference>
<dbReference type="Proteomes" id="UP000006591">
    <property type="component" value="Chloroplast"/>
</dbReference>
<dbReference type="GO" id="GO:0009507">
    <property type="term" value="C:chloroplast"/>
    <property type="evidence" value="ECO:0007669"/>
    <property type="project" value="UniProtKB-SubCell"/>
</dbReference>
<dbReference type="GO" id="GO:0009536">
    <property type="term" value="C:plastid"/>
    <property type="evidence" value="ECO:0000305"/>
    <property type="project" value="Gramene"/>
</dbReference>
<keyword id="KW-0150">Chloroplast</keyword>
<keyword id="KW-0934">Plastid</keyword>
<keyword id="KW-1185">Reference proteome</keyword>
<geneLocation type="chloroplast"/>
<comment type="subcellular location">
    <subcellularLocation>
        <location>Plastid</location>
        <location>Chloroplast</location>
    </subcellularLocation>
</comment>
<comment type="similarity">
    <text evidence="1">Belongs to the ycf73 family.</text>
</comment>
<organism>
    <name type="scientific">Oryza nivara</name>
    <name type="common">Indian wild rice</name>
    <name type="synonym">Oryza sativa f. spontanea</name>
    <dbReference type="NCBI Taxonomy" id="4536"/>
    <lineage>
        <taxon>Eukaryota</taxon>
        <taxon>Viridiplantae</taxon>
        <taxon>Streptophyta</taxon>
        <taxon>Embryophyta</taxon>
        <taxon>Tracheophyta</taxon>
        <taxon>Spermatophyta</taxon>
        <taxon>Magnoliopsida</taxon>
        <taxon>Liliopsida</taxon>
        <taxon>Poales</taxon>
        <taxon>Poaceae</taxon>
        <taxon>BOP clade</taxon>
        <taxon>Oryzoideae</taxon>
        <taxon>Oryzeae</taxon>
        <taxon>Oryzinae</taxon>
        <taxon>Oryza</taxon>
    </lineage>
</organism>
<evidence type="ECO:0000305" key="1"/>
<evidence type="ECO:0000312" key="2">
    <source>
        <dbReference type="Proteomes" id="UP000006591"/>
    </source>
</evidence>
<gene>
    <name type="primary">ycf73-A</name>
</gene>
<gene>
    <name type="primary">ycf73-B</name>
</gene>
<feature type="chain" id="PRO_0000277358" description="Uncharacterized protein ycf73">
    <location>
        <begin position="1"/>
        <end position="222"/>
    </location>
</feature>
<accession>Q6EN90</accession>